<keyword id="KW-1185">Reference proteome</keyword>
<reference key="1">
    <citation type="submission" date="1995-06" db="EMBL/GenBank/DDBJ databases">
        <authorList>
            <person name="Wilczynski G."/>
            <person name="Szopa J."/>
        </authorList>
    </citation>
    <scope>NUCLEOTIDE SEQUENCE [MRNA]</scope>
    <source>
        <strain>cv. Desiree</strain>
        <tissue>Root</tissue>
    </source>
</reference>
<organism>
    <name type="scientific">Solanum tuberosum</name>
    <name type="common">Potato</name>
    <dbReference type="NCBI Taxonomy" id="4113"/>
    <lineage>
        <taxon>Eukaryota</taxon>
        <taxon>Viridiplantae</taxon>
        <taxon>Streptophyta</taxon>
        <taxon>Embryophyta</taxon>
        <taxon>Tracheophyta</taxon>
        <taxon>Spermatophyta</taxon>
        <taxon>Magnoliopsida</taxon>
        <taxon>eudicotyledons</taxon>
        <taxon>Gunneridae</taxon>
        <taxon>Pentapetalae</taxon>
        <taxon>asterids</taxon>
        <taxon>lamiids</taxon>
        <taxon>Solanales</taxon>
        <taxon>Solanaceae</taxon>
        <taxon>Solanoideae</taxon>
        <taxon>Solaneae</taxon>
        <taxon>Solanum</taxon>
    </lineage>
</organism>
<sequence length="254" mass="28595">MASPREENVYMANVAARAERYEEMVEFMEKVVAALDTELTVEERNLLSVAYKNVIGARRASWRIISSIEQKEESRGNEDHVASIKKYRSQIENELTSICNGILKLLDSKLIGSAATGDSKVFYLKMKGDYYRYLAEFKTGTERKEAAENTLSAYKSAQDIANGELAPTHPIRLGLALNFSVFYYEILNSPDRACNLAKQAFDEAIADVDTLGEESYKDSTLIMQLLRDNLTLWTSDMQDDGADEIKEPSKADNE</sequence>
<protein>
    <recommendedName>
        <fullName>14-3-3-like protein RA215</fullName>
    </recommendedName>
</protein>
<name>14332_SOLTU</name>
<dbReference type="EMBL" id="X87370">
    <property type="protein sequence ID" value="CAA60800.1"/>
    <property type="molecule type" value="mRNA"/>
</dbReference>
<dbReference type="PIR" id="S55375">
    <property type="entry name" value="S55375"/>
</dbReference>
<dbReference type="SMR" id="Q43643"/>
<dbReference type="FunCoup" id="Q43643">
    <property type="interactions" value="3155"/>
</dbReference>
<dbReference type="STRING" id="4113.Q43643"/>
<dbReference type="PaxDb" id="4113-PGSC0003DMT400060654"/>
<dbReference type="eggNOG" id="KOG0841">
    <property type="taxonomic scope" value="Eukaryota"/>
</dbReference>
<dbReference type="InParanoid" id="Q43643"/>
<dbReference type="Proteomes" id="UP000011115">
    <property type="component" value="Unassembled WGS sequence"/>
</dbReference>
<dbReference type="ExpressionAtlas" id="Q43643">
    <property type="expression patterns" value="baseline and differential"/>
</dbReference>
<dbReference type="GO" id="GO:0005737">
    <property type="term" value="C:cytoplasm"/>
    <property type="evidence" value="ECO:0000318"/>
    <property type="project" value="GO_Central"/>
</dbReference>
<dbReference type="GO" id="GO:0008104">
    <property type="term" value="P:protein localization"/>
    <property type="evidence" value="ECO:0000318"/>
    <property type="project" value="GO_Central"/>
</dbReference>
<dbReference type="GO" id="GO:0007165">
    <property type="term" value="P:signal transduction"/>
    <property type="evidence" value="ECO:0000318"/>
    <property type="project" value="GO_Central"/>
</dbReference>
<dbReference type="FunFam" id="1.20.190.20:FF:000002">
    <property type="entry name" value="14-3-3 protein epsilon"/>
    <property type="match status" value="1"/>
</dbReference>
<dbReference type="Gene3D" id="1.20.190.20">
    <property type="entry name" value="14-3-3 domain"/>
    <property type="match status" value="1"/>
</dbReference>
<dbReference type="InterPro" id="IPR000308">
    <property type="entry name" value="14-3-3"/>
</dbReference>
<dbReference type="InterPro" id="IPR023409">
    <property type="entry name" value="14-3-3_CS"/>
</dbReference>
<dbReference type="InterPro" id="IPR036815">
    <property type="entry name" value="14-3-3_dom_sf"/>
</dbReference>
<dbReference type="InterPro" id="IPR023410">
    <property type="entry name" value="14-3-3_domain"/>
</dbReference>
<dbReference type="PANTHER" id="PTHR18860">
    <property type="entry name" value="14-3-3 PROTEIN"/>
    <property type="match status" value="1"/>
</dbReference>
<dbReference type="Pfam" id="PF00244">
    <property type="entry name" value="14-3-3"/>
    <property type="match status" value="1"/>
</dbReference>
<dbReference type="PIRSF" id="PIRSF000868">
    <property type="entry name" value="14-3-3"/>
    <property type="match status" value="1"/>
</dbReference>
<dbReference type="PRINTS" id="PR00305">
    <property type="entry name" value="1433ZETA"/>
</dbReference>
<dbReference type="SMART" id="SM00101">
    <property type="entry name" value="14_3_3"/>
    <property type="match status" value="1"/>
</dbReference>
<dbReference type="SUPFAM" id="SSF48445">
    <property type="entry name" value="14-3-3 protein"/>
    <property type="match status" value="1"/>
</dbReference>
<dbReference type="PROSITE" id="PS00796">
    <property type="entry name" value="1433_1"/>
    <property type="match status" value="1"/>
</dbReference>
<dbReference type="PROSITE" id="PS00797">
    <property type="entry name" value="1433_2"/>
    <property type="match status" value="1"/>
</dbReference>
<feature type="chain" id="PRO_0000058699" description="14-3-3-like protein RA215">
    <location>
        <begin position="1"/>
        <end position="254"/>
    </location>
</feature>
<comment type="similarity">
    <text evidence="1">Belongs to the 14-3-3 family.</text>
</comment>
<evidence type="ECO:0000305" key="1"/>
<proteinExistence type="evidence at transcript level"/>
<accession>Q43643</accession>